<evidence type="ECO:0000250" key="1"/>
<evidence type="ECO:0000250" key="2">
    <source>
        <dbReference type="UniProtKB" id="P80293"/>
    </source>
</evidence>
<evidence type="ECO:0000305" key="3"/>
<feature type="chain" id="PRO_0000293964" description="Superoxide dismutase [Mn/Fe] 2">
    <location>
        <begin position="1"/>
        <end position="199"/>
    </location>
</feature>
<feature type="binding site" evidence="2">
    <location>
        <position position="27"/>
    </location>
    <ligand>
        <name>Fe(3+)</name>
        <dbReference type="ChEBI" id="CHEBI:29034"/>
    </ligand>
</feature>
<feature type="binding site" evidence="2">
    <location>
        <position position="27"/>
    </location>
    <ligand>
        <name>Mn(2+)</name>
        <dbReference type="ChEBI" id="CHEBI:29035"/>
    </ligand>
</feature>
<feature type="binding site" evidence="2">
    <location>
        <position position="81"/>
    </location>
    <ligand>
        <name>Fe(3+)</name>
        <dbReference type="ChEBI" id="CHEBI:29034"/>
    </ligand>
</feature>
<feature type="binding site" evidence="2">
    <location>
        <position position="81"/>
    </location>
    <ligand>
        <name>Mn(2+)</name>
        <dbReference type="ChEBI" id="CHEBI:29035"/>
    </ligand>
</feature>
<feature type="binding site" evidence="2">
    <location>
        <position position="161"/>
    </location>
    <ligand>
        <name>Fe(3+)</name>
        <dbReference type="ChEBI" id="CHEBI:29034"/>
    </ligand>
</feature>
<feature type="binding site" evidence="2">
    <location>
        <position position="161"/>
    </location>
    <ligand>
        <name>Mn(2+)</name>
        <dbReference type="ChEBI" id="CHEBI:29035"/>
    </ligand>
</feature>
<feature type="binding site" evidence="2">
    <location>
        <position position="165"/>
    </location>
    <ligand>
        <name>Fe(3+)</name>
        <dbReference type="ChEBI" id="CHEBI:29034"/>
    </ligand>
</feature>
<feature type="binding site" evidence="2">
    <location>
        <position position="165"/>
    </location>
    <ligand>
        <name>Mn(2+)</name>
        <dbReference type="ChEBI" id="CHEBI:29035"/>
    </ligand>
</feature>
<comment type="function">
    <text evidence="2">Destroys superoxide anion radicals which are normally produced within the cells and which are toxic to biological systems. Catalyzes the dismutation of superoxide anion radicals into O2 and H2O2 by successive reduction and oxidation of the transition metal ion at the active site.</text>
</comment>
<comment type="catalytic activity">
    <reaction evidence="2">
        <text>2 superoxide + 2 H(+) = H2O2 + O2</text>
        <dbReference type="Rhea" id="RHEA:20696"/>
        <dbReference type="ChEBI" id="CHEBI:15378"/>
        <dbReference type="ChEBI" id="CHEBI:15379"/>
        <dbReference type="ChEBI" id="CHEBI:16240"/>
        <dbReference type="ChEBI" id="CHEBI:18421"/>
        <dbReference type="EC" id="1.15.1.1"/>
    </reaction>
    <physiologicalReaction direction="left-to-right" evidence="2">
        <dbReference type="Rhea" id="RHEA:20697"/>
    </physiologicalReaction>
</comment>
<comment type="cofactor">
    <cofactor evidence="2">
        <name>Mn(2+)</name>
        <dbReference type="ChEBI" id="CHEBI:29035"/>
    </cofactor>
    <cofactor evidence="2">
        <name>Fe(3+)</name>
        <dbReference type="ChEBI" id="CHEBI:29034"/>
    </cofactor>
    <text evidence="2">Binds 1 Mn(2+) or Fe(3+) ion per subunit.</text>
</comment>
<comment type="subunit">
    <text evidence="1">Homodimer. Can also form a heterodimer with SodA (By similarity).</text>
</comment>
<comment type="similarity">
    <text evidence="3">Belongs to the iron/manganese superoxide dismutase family.</text>
</comment>
<protein>
    <recommendedName>
        <fullName>Superoxide dismutase [Mn/Fe] 2</fullName>
        <ecNumber evidence="2">1.15.1.1</ecNumber>
    </recommendedName>
</protein>
<accession>Q2YUU9</accession>
<sequence>MAFKLPNLPYAYDALEPYIDQRTMEFHHDKHHNTYVTKLNATVEGTELEHQSLADMIANLDKVPEAMRMSVRNNGGGHFNHSLFWEILSPNSEEKGGVIDDIKAQWGTLDEFKNEFANKATTLFGSGWTWLVVNNGKLEIVTTPNQDNPLTEGKTPILLFDVWEHAYYLKYQNKRPDYMTAFWNIVNWKKVDELYQAAK</sequence>
<dbReference type="EC" id="1.15.1.1" evidence="2"/>
<dbReference type="EMBL" id="AJ938182">
    <property type="protein sequence ID" value="CAI79760.1"/>
    <property type="molecule type" value="Genomic_DNA"/>
</dbReference>
<dbReference type="RefSeq" id="WP_000874683.1">
    <property type="nucleotide sequence ID" value="NC_007622.1"/>
</dbReference>
<dbReference type="SMR" id="Q2YUU9"/>
<dbReference type="KEGG" id="sab:SAB0072"/>
<dbReference type="HOGENOM" id="CLU_031625_0_0_9"/>
<dbReference type="GO" id="GO:0005737">
    <property type="term" value="C:cytoplasm"/>
    <property type="evidence" value="ECO:0007669"/>
    <property type="project" value="TreeGrafter"/>
</dbReference>
<dbReference type="GO" id="GO:0046872">
    <property type="term" value="F:metal ion binding"/>
    <property type="evidence" value="ECO:0007669"/>
    <property type="project" value="UniProtKB-KW"/>
</dbReference>
<dbReference type="GO" id="GO:0004784">
    <property type="term" value="F:superoxide dismutase activity"/>
    <property type="evidence" value="ECO:0007669"/>
    <property type="project" value="UniProtKB-EC"/>
</dbReference>
<dbReference type="FunFam" id="1.10.287.990:FF:000001">
    <property type="entry name" value="Superoxide dismutase"/>
    <property type="match status" value="1"/>
</dbReference>
<dbReference type="FunFam" id="3.55.40.20:FF:000001">
    <property type="entry name" value="Superoxide dismutase"/>
    <property type="match status" value="1"/>
</dbReference>
<dbReference type="Gene3D" id="1.10.287.990">
    <property type="entry name" value="Fe,Mn superoxide dismutase (SOD) domain"/>
    <property type="match status" value="1"/>
</dbReference>
<dbReference type="Gene3D" id="3.55.40.20">
    <property type="entry name" value="Iron/manganese superoxide dismutase, C-terminal domain"/>
    <property type="match status" value="1"/>
</dbReference>
<dbReference type="InterPro" id="IPR001189">
    <property type="entry name" value="Mn/Fe_SOD"/>
</dbReference>
<dbReference type="InterPro" id="IPR019833">
    <property type="entry name" value="Mn/Fe_SOD_BS"/>
</dbReference>
<dbReference type="InterPro" id="IPR019832">
    <property type="entry name" value="Mn/Fe_SOD_C"/>
</dbReference>
<dbReference type="InterPro" id="IPR019831">
    <property type="entry name" value="Mn/Fe_SOD_N"/>
</dbReference>
<dbReference type="InterPro" id="IPR036324">
    <property type="entry name" value="Mn/Fe_SOD_N_sf"/>
</dbReference>
<dbReference type="InterPro" id="IPR036314">
    <property type="entry name" value="SOD_C_sf"/>
</dbReference>
<dbReference type="PANTHER" id="PTHR43595">
    <property type="entry name" value="37S RIBOSOMAL PROTEIN S26, MITOCHONDRIAL"/>
    <property type="match status" value="1"/>
</dbReference>
<dbReference type="PANTHER" id="PTHR43595:SF2">
    <property type="entry name" value="SMALL RIBOSOMAL SUBUNIT PROTEIN MS42"/>
    <property type="match status" value="1"/>
</dbReference>
<dbReference type="Pfam" id="PF02777">
    <property type="entry name" value="Sod_Fe_C"/>
    <property type="match status" value="1"/>
</dbReference>
<dbReference type="Pfam" id="PF00081">
    <property type="entry name" value="Sod_Fe_N"/>
    <property type="match status" value="1"/>
</dbReference>
<dbReference type="PIRSF" id="PIRSF000349">
    <property type="entry name" value="SODismutase"/>
    <property type="match status" value="1"/>
</dbReference>
<dbReference type="PRINTS" id="PR01703">
    <property type="entry name" value="MNSODISMTASE"/>
</dbReference>
<dbReference type="SUPFAM" id="SSF54719">
    <property type="entry name" value="Fe,Mn superoxide dismutase (SOD), C-terminal domain"/>
    <property type="match status" value="1"/>
</dbReference>
<dbReference type="SUPFAM" id="SSF46609">
    <property type="entry name" value="Fe,Mn superoxide dismutase (SOD), N-terminal domain"/>
    <property type="match status" value="1"/>
</dbReference>
<dbReference type="PROSITE" id="PS00088">
    <property type="entry name" value="SOD_MN"/>
    <property type="match status" value="1"/>
</dbReference>
<gene>
    <name type="primary">sodM</name>
    <name type="ordered locus">SAB0072</name>
</gene>
<reference key="1">
    <citation type="journal article" date="2007" name="PLoS ONE">
        <title>Molecular correlates of host specialization in Staphylococcus aureus.</title>
        <authorList>
            <person name="Herron-Olson L."/>
            <person name="Fitzgerald J.R."/>
            <person name="Musser J.M."/>
            <person name="Kapur V."/>
        </authorList>
    </citation>
    <scope>NUCLEOTIDE SEQUENCE [LARGE SCALE GENOMIC DNA]</scope>
    <source>
        <strain>bovine RF122 / ET3-1</strain>
    </source>
</reference>
<name>SODM2_STAAB</name>
<keyword id="KW-0408">Iron</keyword>
<keyword id="KW-0464">Manganese</keyword>
<keyword id="KW-0479">Metal-binding</keyword>
<keyword id="KW-0560">Oxidoreductase</keyword>
<keyword id="KW-0346">Stress response</keyword>
<proteinExistence type="inferred from homology"/>
<organism>
    <name type="scientific">Staphylococcus aureus (strain bovine RF122 / ET3-1)</name>
    <dbReference type="NCBI Taxonomy" id="273036"/>
    <lineage>
        <taxon>Bacteria</taxon>
        <taxon>Bacillati</taxon>
        <taxon>Bacillota</taxon>
        <taxon>Bacilli</taxon>
        <taxon>Bacillales</taxon>
        <taxon>Staphylococcaceae</taxon>
        <taxon>Staphylococcus</taxon>
    </lineage>
</organism>